<geneLocation type="mitochondrion"/>
<organism>
    <name type="scientific">Marchantia polymorpha</name>
    <name type="common">Common liverwort</name>
    <name type="synonym">Marchantia aquatica</name>
    <dbReference type="NCBI Taxonomy" id="3197"/>
    <lineage>
        <taxon>Eukaryota</taxon>
        <taxon>Viridiplantae</taxon>
        <taxon>Streptophyta</taxon>
        <taxon>Embryophyta</taxon>
        <taxon>Marchantiophyta</taxon>
        <taxon>Marchantiopsida</taxon>
        <taxon>Marchantiidae</taxon>
        <taxon>Marchantiales</taxon>
        <taxon>Marchantiaceae</taxon>
        <taxon>Marchantia</taxon>
    </lineage>
</organism>
<protein>
    <recommendedName>
        <fullName>NADH-ubiquinone oxidoreductase chain 5</fullName>
        <ecNumber>7.1.1.2</ecNumber>
    </recommendedName>
    <alternativeName>
        <fullName>NADH dehydrogenase subunit 5</fullName>
    </alternativeName>
</protein>
<dbReference type="EC" id="7.1.1.2"/>
<dbReference type="EMBL" id="M68929">
    <property type="protein sequence ID" value="AAC09397.1"/>
    <property type="molecule type" value="Genomic_DNA"/>
</dbReference>
<dbReference type="PIR" id="S25941">
    <property type="entry name" value="S25941"/>
</dbReference>
<dbReference type="RefSeq" id="NP_054400.1">
    <property type="nucleotide sequence ID" value="NC_001660.1"/>
</dbReference>
<dbReference type="SMR" id="P26849"/>
<dbReference type="GeneID" id="2702660"/>
<dbReference type="GO" id="GO:0005743">
    <property type="term" value="C:mitochondrial inner membrane"/>
    <property type="evidence" value="ECO:0007669"/>
    <property type="project" value="UniProtKB-SubCell"/>
</dbReference>
<dbReference type="GO" id="GO:0008137">
    <property type="term" value="F:NADH dehydrogenase (ubiquinone) activity"/>
    <property type="evidence" value="ECO:0007669"/>
    <property type="project" value="UniProtKB-EC"/>
</dbReference>
<dbReference type="GO" id="GO:0042773">
    <property type="term" value="P:ATP synthesis coupled electron transport"/>
    <property type="evidence" value="ECO:0007669"/>
    <property type="project" value="InterPro"/>
</dbReference>
<dbReference type="Gene3D" id="1.20.5.2700">
    <property type="match status" value="1"/>
</dbReference>
<dbReference type="InterPro" id="IPR010934">
    <property type="entry name" value="NADH_DH_su5_C"/>
</dbReference>
<dbReference type="InterPro" id="IPR018393">
    <property type="entry name" value="NADHpl_OxRdtase_5_subgr"/>
</dbReference>
<dbReference type="InterPro" id="IPR001750">
    <property type="entry name" value="ND/Mrp_TM"/>
</dbReference>
<dbReference type="InterPro" id="IPR003945">
    <property type="entry name" value="NU5C-like"/>
</dbReference>
<dbReference type="InterPro" id="IPR001516">
    <property type="entry name" value="Proton_antipo_N"/>
</dbReference>
<dbReference type="NCBIfam" id="TIGR01974">
    <property type="entry name" value="NDH_I_L"/>
    <property type="match status" value="1"/>
</dbReference>
<dbReference type="NCBIfam" id="NF005141">
    <property type="entry name" value="PRK06590.1"/>
    <property type="match status" value="1"/>
</dbReference>
<dbReference type="PANTHER" id="PTHR42829">
    <property type="entry name" value="NADH-UBIQUINONE OXIDOREDUCTASE CHAIN 5"/>
    <property type="match status" value="1"/>
</dbReference>
<dbReference type="PANTHER" id="PTHR42829:SF2">
    <property type="entry name" value="NADH-UBIQUINONE OXIDOREDUCTASE CHAIN 5"/>
    <property type="match status" value="1"/>
</dbReference>
<dbReference type="Pfam" id="PF06455">
    <property type="entry name" value="NADH5_C"/>
    <property type="match status" value="1"/>
</dbReference>
<dbReference type="Pfam" id="PF00361">
    <property type="entry name" value="Proton_antipo_M"/>
    <property type="match status" value="1"/>
</dbReference>
<dbReference type="Pfam" id="PF00662">
    <property type="entry name" value="Proton_antipo_N"/>
    <property type="match status" value="1"/>
</dbReference>
<dbReference type="PRINTS" id="PR01434">
    <property type="entry name" value="NADHDHGNASE5"/>
</dbReference>
<dbReference type="PRINTS" id="PR01435">
    <property type="entry name" value="NPOXDRDTASE5"/>
</dbReference>
<comment type="function">
    <text evidence="1">Core subunit of the mitochondrial membrane respiratory chain NADH dehydrogenase (Complex I) that is believed to belong to the minimal assembly required for catalysis. Complex I functions in the transfer of electrons from NADH to the respiratory chain. The immediate electron acceptor for the enzyme is believed to be ubiquinone (By similarity).</text>
</comment>
<comment type="catalytic activity">
    <reaction>
        <text>a ubiquinone + NADH + 5 H(+)(in) = a ubiquinol + NAD(+) + 4 H(+)(out)</text>
        <dbReference type="Rhea" id="RHEA:29091"/>
        <dbReference type="Rhea" id="RHEA-COMP:9565"/>
        <dbReference type="Rhea" id="RHEA-COMP:9566"/>
        <dbReference type="ChEBI" id="CHEBI:15378"/>
        <dbReference type="ChEBI" id="CHEBI:16389"/>
        <dbReference type="ChEBI" id="CHEBI:17976"/>
        <dbReference type="ChEBI" id="CHEBI:57540"/>
        <dbReference type="ChEBI" id="CHEBI:57945"/>
        <dbReference type="EC" id="7.1.1.2"/>
    </reaction>
</comment>
<comment type="subcellular location">
    <subcellularLocation>
        <location evidence="1">Mitochondrion inner membrane</location>
        <topology evidence="1">Multi-pass membrane protein</topology>
    </subcellularLocation>
</comment>
<comment type="similarity">
    <text evidence="3">Belongs to the complex I subunit 5 family.</text>
</comment>
<proteinExistence type="inferred from homology"/>
<evidence type="ECO:0000250" key="1"/>
<evidence type="ECO:0000255" key="2"/>
<evidence type="ECO:0000305" key="3"/>
<name>NU5M_MARPO</name>
<keyword id="KW-0249">Electron transport</keyword>
<keyword id="KW-0472">Membrane</keyword>
<keyword id="KW-0496">Mitochondrion</keyword>
<keyword id="KW-0999">Mitochondrion inner membrane</keyword>
<keyword id="KW-0520">NAD</keyword>
<keyword id="KW-0679">Respiratory chain</keyword>
<keyword id="KW-1278">Translocase</keyword>
<keyword id="KW-0812">Transmembrane</keyword>
<keyword id="KW-1133">Transmembrane helix</keyword>
<keyword id="KW-0813">Transport</keyword>
<keyword id="KW-0830">Ubiquinone</keyword>
<sequence>MYLLIVILPLIGSFAAGFFGRFLGSRGVAVVTTTCVSLSSIFSCIAFYEVALCASACYIKIAPWIFSELFDAAWGFLFDSLTVILLLVVTIVSSLVHIYSISYMSEDPHSPRFFCYLSIFTFFMLMLVTGDNFIQLFLGWEGVGLASYLLINFWFTRIQANKAAIKAMLINRVGDFGLALGIMGCFTIFQTVDFSTIFACASAFSEPHHYFLFCNMGFHAITVICILVFIGAVGKSAQIGLHTWLPDAMEGPTPVSALIHAATMVTAGVFMIARCSPLFEYSPNALIVITFVGAMTSFFAATTGILQNDLKRVIAYSTCSQLGYMIFACGISNYSVSVFHLMNHACFKALLFLSAGSVIHAMSDEQDMRKMGGLASLLPFTYAMMLIGSLSLIGFPFLTGFYSKDVILELAYTKYTISGNFAFWLGSVSVFFTSYYSFRLLFLTFLAPTNSFKRDLSRCHDAPILMAIPLILLAFGSIFVGYLAKDMMIGLGTNFWANSLFILPKNEILAESEFATPTIIKLIPILFSTLGSFVAYSVNFVVNPLIFALKTSTFGNRLYCFFNKRWFFDKVFNDFLARSFLRFGYEVSFKALDKGAIEILGPYGISYTIRKMAQQISKIQSGFVYHYAFVMLLGLTIFISVIGLWDFISFWVDNRLYFIYIVSFLFINI</sequence>
<accession>P26849</accession>
<feature type="chain" id="PRO_0000118112" description="NADH-ubiquinone oxidoreductase chain 5">
    <location>
        <begin position="1"/>
        <end position="669"/>
    </location>
</feature>
<feature type="transmembrane region" description="Helical" evidence="2">
    <location>
        <begin position="3"/>
        <end position="23"/>
    </location>
</feature>
<feature type="transmembrane region" description="Helical" evidence="2">
    <location>
        <begin position="50"/>
        <end position="70"/>
    </location>
</feature>
<feature type="transmembrane region" description="Helical" evidence="2">
    <location>
        <begin position="81"/>
        <end position="100"/>
    </location>
</feature>
<feature type="transmembrane region" description="Helical" evidence="2">
    <location>
        <begin position="119"/>
        <end position="139"/>
    </location>
</feature>
<feature type="transmembrane region" description="Helical" evidence="2">
    <location>
        <begin position="178"/>
        <end position="198"/>
    </location>
</feature>
<feature type="transmembrane region" description="Helical" evidence="2">
    <location>
        <begin position="211"/>
        <end position="231"/>
    </location>
</feature>
<feature type="transmembrane region" description="Helical" evidence="2">
    <location>
        <begin position="253"/>
        <end position="273"/>
    </location>
</feature>
<feature type="transmembrane region" description="Helical" evidence="2">
    <location>
        <begin position="286"/>
        <end position="306"/>
    </location>
</feature>
<feature type="transmembrane region" description="Helical" evidence="2">
    <location>
        <begin position="322"/>
        <end position="342"/>
    </location>
</feature>
<feature type="transmembrane region" description="Helical" evidence="2">
    <location>
        <begin position="377"/>
        <end position="397"/>
    </location>
</feature>
<feature type="transmembrane region" description="Helical" evidence="2">
    <location>
        <begin position="423"/>
        <end position="443"/>
    </location>
</feature>
<feature type="transmembrane region" description="Helical" evidence="2">
    <location>
        <begin position="464"/>
        <end position="484"/>
    </location>
</feature>
<feature type="transmembrane region" description="Helical" evidence="2">
    <location>
        <begin position="522"/>
        <end position="542"/>
    </location>
</feature>
<feature type="transmembrane region" description="Helical" evidence="2">
    <location>
        <begin position="628"/>
        <end position="648"/>
    </location>
</feature>
<feature type="transmembrane region" description="Helical" evidence="2">
    <location>
        <begin position="649"/>
        <end position="669"/>
    </location>
</feature>
<gene>
    <name type="primary">ND5</name>
    <name type="synonym">NAD5</name>
</gene>
<reference key="1">
    <citation type="journal article" date="1992" name="J. Mol. Biol.">
        <title>Gene organization deduced from the complete sequence of liverwort Marchantia polymorpha mitochondrial DNA. A primitive form of plant mitochondrial genome.</title>
        <authorList>
            <person name="Oda K."/>
            <person name="Yamato K."/>
            <person name="Ohta E."/>
            <person name="Nakamura Y."/>
            <person name="Takemura M."/>
            <person name="Nozato N."/>
            <person name="Akashi K."/>
            <person name="Kanegae T."/>
            <person name="Ogura Y."/>
            <person name="Kohchi T."/>
            <person name="Ohyama K."/>
        </authorList>
    </citation>
    <scope>NUCLEOTIDE SEQUENCE [GENOMIC DNA]</scope>
</reference>
<reference key="2">
    <citation type="journal article" date="1993" name="Mol. Gen. Genet.">
        <title>Cotranscriptional expression of mitochondrial genes for subunits of NADH dehydrogenase, nad5, nad4, nad2, in Marchantia polymorpha.</title>
        <authorList>
            <person name="Nozato N."/>
            <person name="Oda K."/>
            <person name="Yamato K."/>
            <person name="Ohta E."/>
            <person name="Takemura M."/>
            <person name="Akashi K."/>
            <person name="Fukuzawa H."/>
            <person name="Ohyama K."/>
        </authorList>
    </citation>
    <scope>NUCLEOTIDE SEQUENCE [GENOMIC DNA]</scope>
</reference>